<protein>
    <recommendedName>
        <fullName>Cytochrome c oxidase subunit 2</fullName>
        <ecNumber>7.1.1.9</ecNumber>
    </recommendedName>
    <alternativeName>
        <fullName>Cytochrome c oxidase polypeptide II</fullName>
    </alternativeName>
</protein>
<proteinExistence type="inferred from homology"/>
<organism>
    <name type="scientific">Cairina moschata</name>
    <name type="common">Muscovy duck</name>
    <dbReference type="NCBI Taxonomy" id="8855"/>
    <lineage>
        <taxon>Eukaryota</taxon>
        <taxon>Metazoa</taxon>
        <taxon>Chordata</taxon>
        <taxon>Craniata</taxon>
        <taxon>Vertebrata</taxon>
        <taxon>Euteleostomi</taxon>
        <taxon>Archelosauria</taxon>
        <taxon>Archosauria</taxon>
        <taxon>Dinosauria</taxon>
        <taxon>Saurischia</taxon>
        <taxon>Theropoda</taxon>
        <taxon>Coelurosauria</taxon>
        <taxon>Aves</taxon>
        <taxon>Neognathae</taxon>
        <taxon>Galloanserae</taxon>
        <taxon>Anseriformes</taxon>
        <taxon>Anatidae</taxon>
        <taxon>Anatinae</taxon>
        <taxon>Cairina</taxon>
    </lineage>
</organism>
<evidence type="ECO:0000250" key="1">
    <source>
        <dbReference type="UniProtKB" id="P00403"/>
    </source>
</evidence>
<evidence type="ECO:0000250" key="2">
    <source>
        <dbReference type="UniProtKB" id="P00410"/>
    </source>
</evidence>
<evidence type="ECO:0000250" key="3">
    <source>
        <dbReference type="UniProtKB" id="P68530"/>
    </source>
</evidence>
<evidence type="ECO:0000305" key="4"/>
<dbReference type="EC" id="7.1.1.9"/>
<dbReference type="EMBL" id="X68508">
    <property type="protein sequence ID" value="CAA48520.1"/>
    <property type="molecule type" value="Genomic_DNA"/>
</dbReference>
<dbReference type="SMR" id="P50666"/>
<dbReference type="CTD" id="4513"/>
<dbReference type="Proteomes" id="UP000694556">
    <property type="component" value="Unplaced"/>
</dbReference>
<dbReference type="GO" id="GO:0005743">
    <property type="term" value="C:mitochondrial inner membrane"/>
    <property type="evidence" value="ECO:0007669"/>
    <property type="project" value="UniProtKB-SubCell"/>
</dbReference>
<dbReference type="GO" id="GO:0045277">
    <property type="term" value="C:respiratory chain complex IV"/>
    <property type="evidence" value="ECO:0000250"/>
    <property type="project" value="UniProtKB"/>
</dbReference>
<dbReference type="GO" id="GO:0005507">
    <property type="term" value="F:copper ion binding"/>
    <property type="evidence" value="ECO:0007669"/>
    <property type="project" value="InterPro"/>
</dbReference>
<dbReference type="GO" id="GO:0004129">
    <property type="term" value="F:cytochrome-c oxidase activity"/>
    <property type="evidence" value="ECO:0007669"/>
    <property type="project" value="UniProtKB-EC"/>
</dbReference>
<dbReference type="GO" id="GO:0042773">
    <property type="term" value="P:ATP synthesis coupled electron transport"/>
    <property type="evidence" value="ECO:0007669"/>
    <property type="project" value="TreeGrafter"/>
</dbReference>
<dbReference type="CDD" id="cd13912">
    <property type="entry name" value="CcO_II_C"/>
    <property type="match status" value="1"/>
</dbReference>
<dbReference type="FunFam" id="1.10.287.90:FF:000001">
    <property type="entry name" value="Cytochrome c oxidase subunit 2"/>
    <property type="match status" value="1"/>
</dbReference>
<dbReference type="FunFam" id="2.60.40.420:FF:000001">
    <property type="entry name" value="Cytochrome c oxidase subunit 2"/>
    <property type="match status" value="1"/>
</dbReference>
<dbReference type="Gene3D" id="1.10.287.90">
    <property type="match status" value="1"/>
</dbReference>
<dbReference type="Gene3D" id="2.60.40.420">
    <property type="entry name" value="Cupredoxins - blue copper proteins"/>
    <property type="match status" value="1"/>
</dbReference>
<dbReference type="InterPro" id="IPR045187">
    <property type="entry name" value="CcO_II"/>
</dbReference>
<dbReference type="InterPro" id="IPR002429">
    <property type="entry name" value="CcO_II-like_C"/>
</dbReference>
<dbReference type="InterPro" id="IPR034210">
    <property type="entry name" value="CcO_II_C"/>
</dbReference>
<dbReference type="InterPro" id="IPR001505">
    <property type="entry name" value="Copper_CuA"/>
</dbReference>
<dbReference type="InterPro" id="IPR008972">
    <property type="entry name" value="Cupredoxin"/>
</dbReference>
<dbReference type="InterPro" id="IPR014222">
    <property type="entry name" value="Cyt_c_oxidase_su2"/>
</dbReference>
<dbReference type="InterPro" id="IPR011759">
    <property type="entry name" value="Cyt_c_oxidase_su2_TM_dom"/>
</dbReference>
<dbReference type="InterPro" id="IPR036257">
    <property type="entry name" value="Cyt_c_oxidase_su2_TM_sf"/>
</dbReference>
<dbReference type="NCBIfam" id="TIGR02866">
    <property type="entry name" value="CoxB"/>
    <property type="match status" value="1"/>
</dbReference>
<dbReference type="PANTHER" id="PTHR22888:SF9">
    <property type="entry name" value="CYTOCHROME C OXIDASE SUBUNIT 2"/>
    <property type="match status" value="1"/>
</dbReference>
<dbReference type="PANTHER" id="PTHR22888">
    <property type="entry name" value="CYTOCHROME C OXIDASE, SUBUNIT II"/>
    <property type="match status" value="1"/>
</dbReference>
<dbReference type="Pfam" id="PF00116">
    <property type="entry name" value="COX2"/>
    <property type="match status" value="1"/>
</dbReference>
<dbReference type="Pfam" id="PF02790">
    <property type="entry name" value="COX2_TM"/>
    <property type="match status" value="1"/>
</dbReference>
<dbReference type="PRINTS" id="PR01166">
    <property type="entry name" value="CYCOXIDASEII"/>
</dbReference>
<dbReference type="SUPFAM" id="SSF49503">
    <property type="entry name" value="Cupredoxins"/>
    <property type="match status" value="1"/>
</dbReference>
<dbReference type="SUPFAM" id="SSF81464">
    <property type="entry name" value="Cytochrome c oxidase subunit II-like, transmembrane region"/>
    <property type="match status" value="1"/>
</dbReference>
<dbReference type="PROSITE" id="PS00078">
    <property type="entry name" value="COX2"/>
    <property type="match status" value="1"/>
</dbReference>
<dbReference type="PROSITE" id="PS50857">
    <property type="entry name" value="COX2_CUA"/>
    <property type="match status" value="1"/>
</dbReference>
<dbReference type="PROSITE" id="PS50999">
    <property type="entry name" value="COX2_TM"/>
    <property type="match status" value="1"/>
</dbReference>
<comment type="function">
    <text evidence="2">Component of the cytochrome c oxidase, the last enzyme in the mitochondrial electron transport chain which drives oxidative phosphorylation. The respiratory chain contains 3 multisubunit complexes succinate dehydrogenase (complex II, CII), ubiquinol-cytochrome c oxidoreductase (cytochrome b-c1 complex, complex III, CIII) and cytochrome c oxidase (complex IV, CIV), that cooperate to transfer electrons derived from NADH and succinate to molecular oxygen, creating an electrochemical gradient over the inner membrane that drives transmembrane transport and the ATP synthase. Cytochrome c oxidase is the component of the respiratory chain that catalyzes the reduction of oxygen to water. Electrons originating from reduced cytochrome c in the intermembrane space (IMS) are transferred via the dinuclear copper A center (CU(A)) of subunit 2 and heme A of subunit 1 to the active site in subunit 1, a binuclear center (BNC) formed by heme A3 and copper B (CU(B)). The BNC reduces molecular oxygen to 2 water molecules using 4 electrons from cytochrome c in the IMS and 4 protons from the mitochondrial matrix.</text>
</comment>
<comment type="catalytic activity">
    <reaction evidence="2">
        <text>4 Fe(II)-[cytochrome c] + O2 + 8 H(+)(in) = 4 Fe(III)-[cytochrome c] + 2 H2O + 4 H(+)(out)</text>
        <dbReference type="Rhea" id="RHEA:11436"/>
        <dbReference type="Rhea" id="RHEA-COMP:10350"/>
        <dbReference type="Rhea" id="RHEA-COMP:14399"/>
        <dbReference type="ChEBI" id="CHEBI:15377"/>
        <dbReference type="ChEBI" id="CHEBI:15378"/>
        <dbReference type="ChEBI" id="CHEBI:15379"/>
        <dbReference type="ChEBI" id="CHEBI:29033"/>
        <dbReference type="ChEBI" id="CHEBI:29034"/>
        <dbReference type="EC" id="7.1.1.9"/>
    </reaction>
    <physiologicalReaction direction="left-to-right" evidence="2">
        <dbReference type="Rhea" id="RHEA:11437"/>
    </physiologicalReaction>
</comment>
<comment type="cofactor">
    <cofactor evidence="3">
        <name>Cu cation</name>
        <dbReference type="ChEBI" id="CHEBI:23378"/>
    </cofactor>
    <text evidence="3">Binds a dinuclear copper A center per subunit.</text>
</comment>
<comment type="subunit">
    <text evidence="1 3">Component of the cytochrome c oxidase (complex IV, CIV), a multisubunit enzyme composed of 14 subunits. The complex is composed of a catalytic core of 3 subunits MT-CO1, MT-CO2 and MT-CO3, encoded in the mitochondrial DNA, and 11 supernumerary subunits COX4I, COX5A, COX5B, COX6A, COX6B, COX6C, COX7A, COX7B, COX7C, COX8 and NDUFA4, which are encoded in the nuclear genome. The complex exists as a monomer or a dimer and forms supercomplexes (SCs) in the inner mitochondrial membrane with NADH-ubiquinone oxidoreductase (complex I, CI) and ubiquinol-cytochrome c oxidoreductase (cytochrome b-c1 complex, complex III, CIII), resulting in different assemblies (supercomplex SCI(1)III(2)IV(1) and megacomplex MCI(2)III(2)IV(2)) (By similarity). Found in a complex with TMEM177, COA6, COX18, COX20, SCO1 and SCO2. Interacts with TMEM177 in a COX20-dependent manner. Interacts with COX20. Interacts with COX16 (By similarity).</text>
</comment>
<comment type="subcellular location">
    <subcellularLocation>
        <location evidence="3">Mitochondrion inner membrane</location>
        <topology evidence="3">Multi-pass membrane protein</topology>
    </subcellularLocation>
</comment>
<comment type="similarity">
    <text evidence="4">Belongs to the cytochrome c oxidase subunit 2 family.</text>
</comment>
<accession>P50666</accession>
<feature type="chain" id="PRO_0000183528" description="Cytochrome c oxidase subunit 2">
    <location>
        <begin position="1"/>
        <end position="228"/>
    </location>
</feature>
<feature type="topological domain" description="Mitochondrial intermembrane" evidence="3">
    <location>
        <begin position="1"/>
        <end position="14"/>
    </location>
</feature>
<feature type="transmembrane region" description="Helical; Name=I" evidence="3">
    <location>
        <begin position="15"/>
        <end position="45"/>
    </location>
</feature>
<feature type="topological domain" description="Mitochondrial matrix" evidence="3">
    <location>
        <begin position="46"/>
        <end position="58"/>
    </location>
</feature>
<feature type="transmembrane region" description="Helical; Name=II" evidence="3">
    <location>
        <begin position="59"/>
        <end position="86"/>
    </location>
</feature>
<feature type="topological domain" description="Mitochondrial intermembrane" evidence="3">
    <location>
        <begin position="87"/>
        <end position="228"/>
    </location>
</feature>
<feature type="binding site" evidence="3">
    <location>
        <position position="160"/>
    </location>
    <ligand>
        <name>Cu cation</name>
        <dbReference type="ChEBI" id="CHEBI:23378"/>
        <label>A1</label>
    </ligand>
</feature>
<feature type="binding site" evidence="3">
    <location>
        <position position="195"/>
    </location>
    <ligand>
        <name>Cu cation</name>
        <dbReference type="ChEBI" id="CHEBI:23378"/>
        <label>A1</label>
    </ligand>
</feature>
<feature type="binding site" evidence="3">
    <location>
        <position position="195"/>
    </location>
    <ligand>
        <name>Cu cation</name>
        <dbReference type="ChEBI" id="CHEBI:23378"/>
        <label>A2</label>
    </ligand>
</feature>
<feature type="binding site" evidence="3">
    <location>
        <position position="197"/>
    </location>
    <ligand>
        <name>Cu cation</name>
        <dbReference type="ChEBI" id="CHEBI:23378"/>
        <label>A2</label>
    </ligand>
</feature>
<feature type="binding site" evidence="3">
    <location>
        <position position="197"/>
    </location>
    <ligand>
        <name>Mg(2+)</name>
        <dbReference type="ChEBI" id="CHEBI:18420"/>
        <note>ligand shared with MT-CO1</note>
    </ligand>
</feature>
<feature type="binding site" evidence="3">
    <location>
        <position position="199"/>
    </location>
    <ligand>
        <name>Cu cation</name>
        <dbReference type="ChEBI" id="CHEBI:23378"/>
        <label>A1</label>
    </ligand>
</feature>
<feature type="binding site" evidence="3">
    <location>
        <position position="199"/>
    </location>
    <ligand>
        <name>Cu cation</name>
        <dbReference type="ChEBI" id="CHEBI:23378"/>
        <label>A2</label>
    </ligand>
</feature>
<feature type="binding site" evidence="3">
    <location>
        <position position="203"/>
    </location>
    <ligand>
        <name>Cu cation</name>
        <dbReference type="ChEBI" id="CHEBI:23378"/>
        <label>A2</label>
    </ligand>
</feature>
<feature type="binding site" evidence="3">
    <location>
        <position position="206"/>
    </location>
    <ligand>
        <name>Cu cation</name>
        <dbReference type="ChEBI" id="CHEBI:23378"/>
        <label>A1</label>
    </ligand>
</feature>
<geneLocation type="mitochondrion"/>
<reference key="1">
    <citation type="journal article" date="1993" name="Biochem. Int.">
        <title>A gene cytochrome C oxidase subunit II in duck mitochondrial DNA: structural features and sequence evolution.</title>
        <authorList>
            <person name="Pan Y.F."/>
            <person name="Lee Y.H.W."/>
            <person name="Wei Y.H."/>
            <person name="Chiang A.N."/>
        </authorList>
    </citation>
    <scope>NUCLEOTIDE SEQUENCE [GENOMIC DNA]</scope>
    <source>
        <strain>Muscovy shinney duck</strain>
        <tissue>Liver</tissue>
    </source>
</reference>
<sequence length="228" mass="25523">MANHSQLGFQDASSPIMEELVEFHDHALIVALAICSLVLYLLAHMLMEKLSSNAVDAQEVELIWTILPAIVLVLLALPSLQILYMMDEIDEPDLTLKAIGHQWYWSYEYTDFKDLSFDSYMIPTTDLPNGHFRLLEVDHRVVVPMESPIRVIITAGDVLHSWAVPTLGVKTDAIPGRLNQTSFIATRPGVFYGQCSEICGANHSYMPIVVESTPLPYFETWSSLLSAS</sequence>
<keyword id="KW-0186">Copper</keyword>
<keyword id="KW-0249">Electron transport</keyword>
<keyword id="KW-0460">Magnesium</keyword>
<keyword id="KW-0472">Membrane</keyword>
<keyword id="KW-0479">Metal-binding</keyword>
<keyword id="KW-0496">Mitochondrion</keyword>
<keyword id="KW-0999">Mitochondrion inner membrane</keyword>
<keyword id="KW-1185">Reference proteome</keyword>
<keyword id="KW-0679">Respiratory chain</keyword>
<keyword id="KW-1278">Translocase</keyword>
<keyword id="KW-0812">Transmembrane</keyword>
<keyword id="KW-1133">Transmembrane helix</keyword>
<keyword id="KW-0813">Transport</keyword>
<gene>
    <name type="primary">MT-CO2</name>
    <name type="synonym">COII</name>
    <name type="synonym">COXII</name>
    <name type="synonym">MTCO2</name>
</gene>
<name>COX2_CAIMO</name>